<protein>
    <recommendedName>
        <fullName evidence="2">Ornithine carbamoyltransferase, catabolic</fullName>
        <shortName evidence="2">OTCase</shortName>
        <ecNumber evidence="2">2.1.3.3</ecNumber>
    </recommendedName>
</protein>
<evidence type="ECO:0000250" key="1"/>
<evidence type="ECO:0000255" key="2">
    <source>
        <dbReference type="HAMAP-Rule" id="MF_01109"/>
    </source>
</evidence>
<comment type="function">
    <text evidence="1">Reversibly catalyzes the transfer of the carbamoyl group from carbamoyl phosphate (CP) to the N(epsilon) atom of ornithine (ORN) to produce L-citrulline.</text>
</comment>
<comment type="catalytic activity">
    <reaction evidence="2">
        <text>carbamoyl phosphate + L-ornithine = L-citrulline + phosphate + H(+)</text>
        <dbReference type="Rhea" id="RHEA:19513"/>
        <dbReference type="ChEBI" id="CHEBI:15378"/>
        <dbReference type="ChEBI" id="CHEBI:43474"/>
        <dbReference type="ChEBI" id="CHEBI:46911"/>
        <dbReference type="ChEBI" id="CHEBI:57743"/>
        <dbReference type="ChEBI" id="CHEBI:58228"/>
        <dbReference type="EC" id="2.1.3.3"/>
    </reaction>
</comment>
<comment type="pathway">
    <text evidence="2">Amino-acid degradation; L-arginine degradation via ADI pathway; carbamoyl phosphate from L-arginine: step 2/2.</text>
</comment>
<comment type="subcellular location">
    <subcellularLocation>
        <location evidence="2">Cytoplasm</location>
    </subcellularLocation>
</comment>
<comment type="similarity">
    <text evidence="2">Belongs to the aspartate/ornithine carbamoyltransferase superfamily. OTCase family.</text>
</comment>
<accession>Q63U72</accession>
<dbReference type="EC" id="2.1.3.3" evidence="2"/>
<dbReference type="EMBL" id="BX571965">
    <property type="protein sequence ID" value="CAH35743.1"/>
    <property type="molecule type" value="Genomic_DNA"/>
</dbReference>
<dbReference type="RefSeq" id="WP_004521536.1">
    <property type="nucleotide sequence ID" value="NZ_CP009538.1"/>
</dbReference>
<dbReference type="RefSeq" id="YP_108344.1">
    <property type="nucleotide sequence ID" value="NC_006350.1"/>
</dbReference>
<dbReference type="SMR" id="Q63U72"/>
<dbReference type="STRING" id="272560.BPSL1744"/>
<dbReference type="KEGG" id="bps:BPSL1744"/>
<dbReference type="PATRIC" id="fig|272560.51.peg.3843"/>
<dbReference type="eggNOG" id="COG0078">
    <property type="taxonomic scope" value="Bacteria"/>
</dbReference>
<dbReference type="UniPathway" id="UPA00254">
    <property type="reaction ID" value="UER00365"/>
</dbReference>
<dbReference type="Proteomes" id="UP000000605">
    <property type="component" value="Chromosome 1"/>
</dbReference>
<dbReference type="GO" id="GO:0005737">
    <property type="term" value="C:cytoplasm"/>
    <property type="evidence" value="ECO:0007669"/>
    <property type="project" value="UniProtKB-SubCell"/>
</dbReference>
<dbReference type="GO" id="GO:0016597">
    <property type="term" value="F:amino acid binding"/>
    <property type="evidence" value="ECO:0007669"/>
    <property type="project" value="InterPro"/>
</dbReference>
<dbReference type="GO" id="GO:0004585">
    <property type="term" value="F:ornithine carbamoyltransferase activity"/>
    <property type="evidence" value="ECO:0007669"/>
    <property type="project" value="UniProtKB-UniRule"/>
</dbReference>
<dbReference type="GO" id="GO:0042450">
    <property type="term" value="P:arginine biosynthetic process via ornithine"/>
    <property type="evidence" value="ECO:0007669"/>
    <property type="project" value="TreeGrafter"/>
</dbReference>
<dbReference type="GO" id="GO:0019547">
    <property type="term" value="P:arginine catabolic process to ornithine"/>
    <property type="evidence" value="ECO:0007669"/>
    <property type="project" value="UniProtKB-UniPathway"/>
</dbReference>
<dbReference type="GO" id="GO:0019240">
    <property type="term" value="P:citrulline biosynthetic process"/>
    <property type="evidence" value="ECO:0007669"/>
    <property type="project" value="TreeGrafter"/>
</dbReference>
<dbReference type="GO" id="GO:0006526">
    <property type="term" value="P:L-arginine biosynthetic process"/>
    <property type="evidence" value="ECO:0007669"/>
    <property type="project" value="UniProtKB-UniRule"/>
</dbReference>
<dbReference type="FunFam" id="3.40.50.1370:FF:000004">
    <property type="entry name" value="Ornithine carbamoyltransferase"/>
    <property type="match status" value="1"/>
</dbReference>
<dbReference type="Gene3D" id="3.40.50.1370">
    <property type="entry name" value="Aspartate/ornithine carbamoyltransferase"/>
    <property type="match status" value="2"/>
</dbReference>
<dbReference type="HAMAP" id="MF_01109">
    <property type="entry name" value="OTCase"/>
    <property type="match status" value="1"/>
</dbReference>
<dbReference type="InterPro" id="IPR006132">
    <property type="entry name" value="Asp/Orn_carbamoyltranf_P-bd"/>
</dbReference>
<dbReference type="InterPro" id="IPR006130">
    <property type="entry name" value="Asp/Orn_carbamoylTrfase"/>
</dbReference>
<dbReference type="InterPro" id="IPR036901">
    <property type="entry name" value="Asp/Orn_carbamoylTrfase_sf"/>
</dbReference>
<dbReference type="InterPro" id="IPR006131">
    <property type="entry name" value="Asp_carbamoyltransf_Asp/Orn-bd"/>
</dbReference>
<dbReference type="InterPro" id="IPR002292">
    <property type="entry name" value="Orn/put_carbamltrans"/>
</dbReference>
<dbReference type="InterPro" id="IPR024904">
    <property type="entry name" value="OTCase_ArgI"/>
</dbReference>
<dbReference type="NCBIfam" id="TIGR00658">
    <property type="entry name" value="orni_carb_tr"/>
    <property type="match status" value="1"/>
</dbReference>
<dbReference type="NCBIfam" id="NF002470">
    <property type="entry name" value="PRK01713.1"/>
    <property type="match status" value="1"/>
</dbReference>
<dbReference type="PANTHER" id="PTHR45753:SF2">
    <property type="entry name" value="ORNITHINE CARBAMOYLTRANSFERASE"/>
    <property type="match status" value="1"/>
</dbReference>
<dbReference type="PANTHER" id="PTHR45753">
    <property type="entry name" value="ORNITHINE CARBAMOYLTRANSFERASE, MITOCHONDRIAL"/>
    <property type="match status" value="1"/>
</dbReference>
<dbReference type="Pfam" id="PF00185">
    <property type="entry name" value="OTCace"/>
    <property type="match status" value="1"/>
</dbReference>
<dbReference type="Pfam" id="PF02729">
    <property type="entry name" value="OTCace_N"/>
    <property type="match status" value="1"/>
</dbReference>
<dbReference type="PRINTS" id="PR00100">
    <property type="entry name" value="AOTCASE"/>
</dbReference>
<dbReference type="PRINTS" id="PR00102">
    <property type="entry name" value="OTCASE"/>
</dbReference>
<dbReference type="SUPFAM" id="SSF53671">
    <property type="entry name" value="Aspartate/ornithine carbamoyltransferase"/>
    <property type="match status" value="1"/>
</dbReference>
<dbReference type="PROSITE" id="PS00097">
    <property type="entry name" value="CARBAMOYLTRANSFERASE"/>
    <property type="match status" value="1"/>
</dbReference>
<gene>
    <name evidence="2" type="primary">arcB</name>
    <name type="ordered locus">BPSL1744</name>
</gene>
<keyword id="KW-0056">Arginine metabolism</keyword>
<keyword id="KW-0963">Cytoplasm</keyword>
<keyword id="KW-1185">Reference proteome</keyword>
<keyword id="KW-0808">Transferase</keyword>
<organism>
    <name type="scientific">Burkholderia pseudomallei (strain K96243)</name>
    <dbReference type="NCBI Taxonomy" id="272560"/>
    <lineage>
        <taxon>Bacteria</taxon>
        <taxon>Pseudomonadati</taxon>
        <taxon>Pseudomonadota</taxon>
        <taxon>Betaproteobacteria</taxon>
        <taxon>Burkholderiales</taxon>
        <taxon>Burkholderiaceae</taxon>
        <taxon>Burkholderia</taxon>
        <taxon>pseudomallei group</taxon>
    </lineage>
</organism>
<sequence>MSFNLHNRNLLSLIHHNARELRYLLDLARDLKRAKYSGTEQPRLLRKNIALIFEKTSTRTRCAFEVAAYDQGANVTYIDPASSQIGHKESMRDTARVLGRMYDAIEYRGFSQEIVEELAHHAGVPVFNGLTDEYHPTQMLADVMTMREHSDKPLHDIRYAYLGDARNNMGNSLLLIGAKLGMDVRIGAPKSLWPAADFIAQCEAFAAESGARLTLTEDPYEAVKGVDFIHTDVWVSMGEPVEAWDERINALLPYQVNRKLIESTGNPRTRFMHCLPSFHNCETKVGKQIAERYPHLKDGIEVTDEVFESPRCIAFEQAENRMHTIKAVLVSTLGGI</sequence>
<proteinExistence type="inferred from homology"/>
<reference key="1">
    <citation type="journal article" date="2004" name="Proc. Natl. Acad. Sci. U.S.A.">
        <title>Genomic plasticity of the causative agent of melioidosis, Burkholderia pseudomallei.</title>
        <authorList>
            <person name="Holden M.T.G."/>
            <person name="Titball R.W."/>
            <person name="Peacock S.J."/>
            <person name="Cerdeno-Tarraga A.-M."/>
            <person name="Atkins T."/>
            <person name="Crossman L.C."/>
            <person name="Pitt T."/>
            <person name="Churcher C."/>
            <person name="Mungall K.L."/>
            <person name="Bentley S.D."/>
            <person name="Sebaihia M."/>
            <person name="Thomson N.R."/>
            <person name="Bason N."/>
            <person name="Beacham I.R."/>
            <person name="Brooks K."/>
            <person name="Brown K.A."/>
            <person name="Brown N.F."/>
            <person name="Challis G.L."/>
            <person name="Cherevach I."/>
            <person name="Chillingworth T."/>
            <person name="Cronin A."/>
            <person name="Crossett B."/>
            <person name="Davis P."/>
            <person name="DeShazer D."/>
            <person name="Feltwell T."/>
            <person name="Fraser A."/>
            <person name="Hance Z."/>
            <person name="Hauser H."/>
            <person name="Holroyd S."/>
            <person name="Jagels K."/>
            <person name="Keith K.E."/>
            <person name="Maddison M."/>
            <person name="Moule S."/>
            <person name="Price C."/>
            <person name="Quail M.A."/>
            <person name="Rabbinowitsch E."/>
            <person name="Rutherford K."/>
            <person name="Sanders M."/>
            <person name="Simmonds M."/>
            <person name="Songsivilai S."/>
            <person name="Stevens K."/>
            <person name="Tumapa S."/>
            <person name="Vesaratchavest M."/>
            <person name="Whitehead S."/>
            <person name="Yeats C."/>
            <person name="Barrell B.G."/>
            <person name="Oyston P.C.F."/>
            <person name="Parkhill J."/>
        </authorList>
    </citation>
    <scope>NUCLEOTIDE SEQUENCE [LARGE SCALE GENOMIC DNA]</scope>
    <source>
        <strain>K96243</strain>
    </source>
</reference>
<feature type="chain" id="PRO_0000112903" description="Ornithine carbamoyltransferase, catabolic">
    <location>
        <begin position="1"/>
        <end position="336"/>
    </location>
</feature>
<feature type="binding site" evidence="2">
    <location>
        <begin position="57"/>
        <end position="60"/>
    </location>
    <ligand>
        <name>carbamoyl phosphate</name>
        <dbReference type="ChEBI" id="CHEBI:58228"/>
    </ligand>
</feature>
<feature type="binding site" evidence="2">
    <location>
        <position position="84"/>
    </location>
    <ligand>
        <name>carbamoyl phosphate</name>
        <dbReference type="ChEBI" id="CHEBI:58228"/>
    </ligand>
</feature>
<feature type="binding site" evidence="2">
    <location>
        <position position="108"/>
    </location>
    <ligand>
        <name>carbamoyl phosphate</name>
        <dbReference type="ChEBI" id="CHEBI:58228"/>
    </ligand>
</feature>
<feature type="binding site" evidence="2">
    <location>
        <begin position="135"/>
        <end position="138"/>
    </location>
    <ligand>
        <name>carbamoyl phosphate</name>
        <dbReference type="ChEBI" id="CHEBI:58228"/>
    </ligand>
</feature>
<feature type="binding site" evidence="2">
    <location>
        <position position="168"/>
    </location>
    <ligand>
        <name>L-ornithine</name>
        <dbReference type="ChEBI" id="CHEBI:46911"/>
    </ligand>
</feature>
<feature type="binding site" evidence="2">
    <location>
        <position position="232"/>
    </location>
    <ligand>
        <name>L-ornithine</name>
        <dbReference type="ChEBI" id="CHEBI:46911"/>
    </ligand>
</feature>
<feature type="binding site" evidence="2">
    <location>
        <begin position="236"/>
        <end position="237"/>
    </location>
    <ligand>
        <name>L-ornithine</name>
        <dbReference type="ChEBI" id="CHEBI:46911"/>
    </ligand>
</feature>
<feature type="binding site" evidence="2">
    <location>
        <begin position="274"/>
        <end position="275"/>
    </location>
    <ligand>
        <name>carbamoyl phosphate</name>
        <dbReference type="ChEBI" id="CHEBI:58228"/>
    </ligand>
</feature>
<feature type="binding site" evidence="2">
    <location>
        <position position="321"/>
    </location>
    <ligand>
        <name>carbamoyl phosphate</name>
        <dbReference type="ChEBI" id="CHEBI:58228"/>
    </ligand>
</feature>
<name>OTCC_BURPS</name>